<keyword id="KW-0963">Cytoplasm</keyword>
<keyword id="KW-0342">GTP-binding</keyword>
<keyword id="KW-0378">Hydrolase</keyword>
<keyword id="KW-0460">Magnesium</keyword>
<keyword id="KW-0479">Metal-binding</keyword>
<keyword id="KW-0547">Nucleotide-binding</keyword>
<keyword id="KW-0630">Potassium</keyword>
<keyword id="KW-1185">Reference proteome</keyword>
<keyword id="KW-0819">tRNA processing</keyword>
<dbReference type="EC" id="3.6.-.-" evidence="1"/>
<dbReference type="EMBL" id="CP000924">
    <property type="protein sequence ID" value="ABY95911.1"/>
    <property type="molecule type" value="Genomic_DNA"/>
</dbReference>
<dbReference type="SMR" id="B0K8H9"/>
<dbReference type="STRING" id="340099.Teth39_2290"/>
<dbReference type="KEGG" id="tpd:Teth39_2290"/>
<dbReference type="eggNOG" id="COG0486">
    <property type="taxonomic scope" value="Bacteria"/>
</dbReference>
<dbReference type="HOGENOM" id="CLU_019624_4_1_9"/>
<dbReference type="Proteomes" id="UP000002156">
    <property type="component" value="Chromosome"/>
</dbReference>
<dbReference type="GO" id="GO:0005829">
    <property type="term" value="C:cytosol"/>
    <property type="evidence" value="ECO:0007669"/>
    <property type="project" value="TreeGrafter"/>
</dbReference>
<dbReference type="GO" id="GO:0005525">
    <property type="term" value="F:GTP binding"/>
    <property type="evidence" value="ECO:0007669"/>
    <property type="project" value="UniProtKB-UniRule"/>
</dbReference>
<dbReference type="GO" id="GO:0003924">
    <property type="term" value="F:GTPase activity"/>
    <property type="evidence" value="ECO:0007669"/>
    <property type="project" value="UniProtKB-UniRule"/>
</dbReference>
<dbReference type="GO" id="GO:0046872">
    <property type="term" value="F:metal ion binding"/>
    <property type="evidence" value="ECO:0007669"/>
    <property type="project" value="UniProtKB-KW"/>
</dbReference>
<dbReference type="GO" id="GO:0030488">
    <property type="term" value="P:tRNA methylation"/>
    <property type="evidence" value="ECO:0007669"/>
    <property type="project" value="TreeGrafter"/>
</dbReference>
<dbReference type="GO" id="GO:0002098">
    <property type="term" value="P:tRNA wobble uridine modification"/>
    <property type="evidence" value="ECO:0007669"/>
    <property type="project" value="TreeGrafter"/>
</dbReference>
<dbReference type="CDD" id="cd04164">
    <property type="entry name" value="trmE"/>
    <property type="match status" value="1"/>
</dbReference>
<dbReference type="CDD" id="cd14858">
    <property type="entry name" value="TrmE_N"/>
    <property type="match status" value="1"/>
</dbReference>
<dbReference type="FunFam" id="3.30.1360.120:FF:000003">
    <property type="entry name" value="tRNA modification GTPase MnmE"/>
    <property type="match status" value="1"/>
</dbReference>
<dbReference type="FunFam" id="3.40.50.300:FF:000494">
    <property type="entry name" value="tRNA modification GTPase MnmE"/>
    <property type="match status" value="1"/>
</dbReference>
<dbReference type="Gene3D" id="3.40.50.300">
    <property type="entry name" value="P-loop containing nucleotide triphosphate hydrolases"/>
    <property type="match status" value="1"/>
</dbReference>
<dbReference type="Gene3D" id="3.30.1360.120">
    <property type="entry name" value="Probable tRNA modification gtpase trme, domain 1"/>
    <property type="match status" value="1"/>
</dbReference>
<dbReference type="Gene3D" id="1.20.120.430">
    <property type="entry name" value="tRNA modification GTPase MnmE domain 2"/>
    <property type="match status" value="1"/>
</dbReference>
<dbReference type="HAMAP" id="MF_00379">
    <property type="entry name" value="GTPase_MnmE"/>
    <property type="match status" value="1"/>
</dbReference>
<dbReference type="InterPro" id="IPR031168">
    <property type="entry name" value="G_TrmE"/>
</dbReference>
<dbReference type="InterPro" id="IPR006073">
    <property type="entry name" value="GTP-bd"/>
</dbReference>
<dbReference type="InterPro" id="IPR018948">
    <property type="entry name" value="GTP-bd_TrmE_N"/>
</dbReference>
<dbReference type="InterPro" id="IPR004520">
    <property type="entry name" value="GTPase_MnmE"/>
</dbReference>
<dbReference type="InterPro" id="IPR027368">
    <property type="entry name" value="MnmE_dom2"/>
</dbReference>
<dbReference type="InterPro" id="IPR025867">
    <property type="entry name" value="MnmE_helical"/>
</dbReference>
<dbReference type="InterPro" id="IPR027417">
    <property type="entry name" value="P-loop_NTPase"/>
</dbReference>
<dbReference type="InterPro" id="IPR005225">
    <property type="entry name" value="Small_GTP-bd"/>
</dbReference>
<dbReference type="InterPro" id="IPR027266">
    <property type="entry name" value="TrmE/GcvT_dom1"/>
</dbReference>
<dbReference type="NCBIfam" id="TIGR00450">
    <property type="entry name" value="mnmE_trmE_thdF"/>
    <property type="match status" value="1"/>
</dbReference>
<dbReference type="NCBIfam" id="NF003661">
    <property type="entry name" value="PRK05291.1-3"/>
    <property type="match status" value="1"/>
</dbReference>
<dbReference type="NCBIfam" id="TIGR00231">
    <property type="entry name" value="small_GTP"/>
    <property type="match status" value="1"/>
</dbReference>
<dbReference type="PANTHER" id="PTHR42714">
    <property type="entry name" value="TRNA MODIFICATION GTPASE GTPBP3"/>
    <property type="match status" value="1"/>
</dbReference>
<dbReference type="PANTHER" id="PTHR42714:SF2">
    <property type="entry name" value="TRNA MODIFICATION GTPASE GTPBP3, MITOCHONDRIAL"/>
    <property type="match status" value="1"/>
</dbReference>
<dbReference type="Pfam" id="PF01926">
    <property type="entry name" value="MMR_HSR1"/>
    <property type="match status" value="1"/>
</dbReference>
<dbReference type="Pfam" id="PF12631">
    <property type="entry name" value="MnmE_helical"/>
    <property type="match status" value="1"/>
</dbReference>
<dbReference type="Pfam" id="PF10396">
    <property type="entry name" value="TrmE_N"/>
    <property type="match status" value="1"/>
</dbReference>
<dbReference type="PRINTS" id="PR00449">
    <property type="entry name" value="RASTRNSFRMNG"/>
</dbReference>
<dbReference type="SUPFAM" id="SSF52540">
    <property type="entry name" value="P-loop containing nucleoside triphosphate hydrolases"/>
    <property type="match status" value="1"/>
</dbReference>
<dbReference type="PROSITE" id="PS51709">
    <property type="entry name" value="G_TRME"/>
    <property type="match status" value="1"/>
</dbReference>
<organism>
    <name type="scientific">Thermoanaerobacter pseudethanolicus (strain ATCC 33223 / 39E)</name>
    <name type="common">Clostridium thermohydrosulfuricum</name>
    <dbReference type="NCBI Taxonomy" id="340099"/>
    <lineage>
        <taxon>Bacteria</taxon>
        <taxon>Bacillati</taxon>
        <taxon>Bacillota</taxon>
        <taxon>Clostridia</taxon>
        <taxon>Thermoanaerobacterales</taxon>
        <taxon>Thermoanaerobacteraceae</taxon>
        <taxon>Thermoanaerobacter</taxon>
    </lineage>
</organism>
<gene>
    <name evidence="1" type="primary">mnmE</name>
    <name evidence="1" type="synonym">trmE</name>
    <name type="ordered locus">Teth39_2290</name>
</gene>
<feature type="chain" id="PRO_0000345923" description="tRNA modification GTPase MnmE">
    <location>
        <begin position="1"/>
        <end position="460"/>
    </location>
</feature>
<feature type="domain" description="TrmE-type G">
    <location>
        <begin position="222"/>
        <end position="381"/>
    </location>
</feature>
<feature type="binding site" evidence="1">
    <location>
        <position position="22"/>
    </location>
    <ligand>
        <name>(6S)-5-formyl-5,6,7,8-tetrahydrofolate</name>
        <dbReference type="ChEBI" id="CHEBI:57457"/>
    </ligand>
</feature>
<feature type="binding site" evidence="1">
    <location>
        <position position="87"/>
    </location>
    <ligand>
        <name>(6S)-5-formyl-5,6,7,8-tetrahydrofolate</name>
        <dbReference type="ChEBI" id="CHEBI:57457"/>
    </ligand>
</feature>
<feature type="binding site" evidence="1">
    <location>
        <position position="126"/>
    </location>
    <ligand>
        <name>(6S)-5-formyl-5,6,7,8-tetrahydrofolate</name>
        <dbReference type="ChEBI" id="CHEBI:57457"/>
    </ligand>
</feature>
<feature type="binding site" evidence="1">
    <location>
        <begin position="232"/>
        <end position="237"/>
    </location>
    <ligand>
        <name>GTP</name>
        <dbReference type="ChEBI" id="CHEBI:37565"/>
    </ligand>
</feature>
<feature type="binding site" evidence="1">
    <location>
        <position position="232"/>
    </location>
    <ligand>
        <name>K(+)</name>
        <dbReference type="ChEBI" id="CHEBI:29103"/>
    </ligand>
</feature>
<feature type="binding site" evidence="1">
    <location>
        <position position="236"/>
    </location>
    <ligand>
        <name>Mg(2+)</name>
        <dbReference type="ChEBI" id="CHEBI:18420"/>
    </ligand>
</feature>
<feature type="binding site" evidence="1">
    <location>
        <begin position="251"/>
        <end position="257"/>
    </location>
    <ligand>
        <name>GTP</name>
        <dbReference type="ChEBI" id="CHEBI:37565"/>
    </ligand>
</feature>
<feature type="binding site" evidence="1">
    <location>
        <position position="251"/>
    </location>
    <ligand>
        <name>K(+)</name>
        <dbReference type="ChEBI" id="CHEBI:29103"/>
    </ligand>
</feature>
<feature type="binding site" evidence="1">
    <location>
        <position position="253"/>
    </location>
    <ligand>
        <name>K(+)</name>
        <dbReference type="ChEBI" id="CHEBI:29103"/>
    </ligand>
</feature>
<feature type="binding site" evidence="1">
    <location>
        <position position="256"/>
    </location>
    <ligand>
        <name>K(+)</name>
        <dbReference type="ChEBI" id="CHEBI:29103"/>
    </ligand>
</feature>
<feature type="binding site" evidence="1">
    <location>
        <position position="257"/>
    </location>
    <ligand>
        <name>Mg(2+)</name>
        <dbReference type="ChEBI" id="CHEBI:18420"/>
    </ligand>
</feature>
<feature type="binding site" evidence="1">
    <location>
        <begin position="276"/>
        <end position="279"/>
    </location>
    <ligand>
        <name>GTP</name>
        <dbReference type="ChEBI" id="CHEBI:37565"/>
    </ligand>
</feature>
<feature type="binding site" evidence="1">
    <location>
        <position position="460"/>
    </location>
    <ligand>
        <name>(6S)-5-formyl-5,6,7,8-tetrahydrofolate</name>
        <dbReference type="ChEBI" id="CHEBI:57457"/>
    </ligand>
</feature>
<protein>
    <recommendedName>
        <fullName evidence="1">tRNA modification GTPase MnmE</fullName>
        <ecNumber evidence="1">3.6.-.-</ecNumber>
    </recommendedName>
</protein>
<reference key="1">
    <citation type="submission" date="2008-01" db="EMBL/GenBank/DDBJ databases">
        <title>Complete sequence of Thermoanaerobacter pseudethanolicus 39E.</title>
        <authorList>
            <person name="Copeland A."/>
            <person name="Lucas S."/>
            <person name="Lapidus A."/>
            <person name="Barry K."/>
            <person name="Glavina del Rio T."/>
            <person name="Dalin E."/>
            <person name="Tice H."/>
            <person name="Pitluck S."/>
            <person name="Bruce D."/>
            <person name="Goodwin L."/>
            <person name="Saunders E."/>
            <person name="Brettin T."/>
            <person name="Detter J.C."/>
            <person name="Han C."/>
            <person name="Schmutz J."/>
            <person name="Larimer F."/>
            <person name="Land M."/>
            <person name="Hauser L."/>
            <person name="Kyrpides N."/>
            <person name="Lykidis A."/>
            <person name="Hemme C."/>
            <person name="Fields M.W."/>
            <person name="He Z."/>
            <person name="Zhou J."/>
            <person name="Richardson P."/>
        </authorList>
    </citation>
    <scope>NUCLEOTIDE SEQUENCE [LARGE SCALE GENOMIC DNA]</scope>
    <source>
        <strain>ATCC 33223 / DSM 2355 / 39E</strain>
    </source>
</reference>
<sequence>MVFDTIAAISTFPGEAGIGIVRLSGDDALEIISKIFKPYKSKDIKKVKSHTLHYGHIVDPETEEVYDEVLVSIMKKPNTYTREDIVEINCHGGIVVTSKILELVLKQGARLAEPGEFTKRAFLNGRIDLSQAEAVIDIIRAKTMLANRYAQKQLVGYVGSKIKEMKDKIMGLLVHLLALIDFPEEDVEELERKEILETAKEIVEDIDKLIASSESGRIIREGLKTAIIGKPNVGKSSLLNALLKENRAIVTDIPGTTRDIIEEYVNVKGIPIKLIDTAGIRDTDELVEKIGVTKSKEVLAEADLILFVLDASRELTKEDYEIFDILTGKNIIFVLNKIDLPKKIDEKELKDLTKDGIIIEVSTVEKIGLEELENTIYNLVFRGDISLREDEIVINSRHKEALINAKKYMESCVEAIEGGYSEDLITIDLNAALDQLGKITGETATEDLINEIFERFCVGK</sequence>
<evidence type="ECO:0000255" key="1">
    <source>
        <dbReference type="HAMAP-Rule" id="MF_00379"/>
    </source>
</evidence>
<accession>B0K8H9</accession>
<proteinExistence type="inferred from homology"/>
<comment type="function">
    <text evidence="1">Exhibits a very high intrinsic GTPase hydrolysis rate. Involved in the addition of a carboxymethylaminomethyl (cmnm) group at the wobble position (U34) of certain tRNAs, forming tRNA-cmnm(5)s(2)U34.</text>
</comment>
<comment type="cofactor">
    <cofactor evidence="1">
        <name>K(+)</name>
        <dbReference type="ChEBI" id="CHEBI:29103"/>
    </cofactor>
    <text evidence="1">Binds 1 potassium ion per subunit.</text>
</comment>
<comment type="subunit">
    <text evidence="1">Homodimer. Heterotetramer of two MnmE and two MnmG subunits.</text>
</comment>
<comment type="subcellular location">
    <subcellularLocation>
        <location evidence="1">Cytoplasm</location>
    </subcellularLocation>
</comment>
<comment type="similarity">
    <text evidence="1">Belongs to the TRAFAC class TrmE-Era-EngA-EngB-Septin-like GTPase superfamily. TrmE GTPase family.</text>
</comment>
<name>MNME_THEP3</name>